<dbReference type="EC" id="6.3.5.2" evidence="1"/>
<dbReference type="EMBL" id="CP000024">
    <property type="protein sequence ID" value="AAV62474.1"/>
    <property type="molecule type" value="Genomic_DNA"/>
</dbReference>
<dbReference type="SMR" id="Q5M029"/>
<dbReference type="MEROPS" id="C26.957"/>
<dbReference type="KEGG" id="stc:str0886"/>
<dbReference type="HOGENOM" id="CLU_014340_0_5_9"/>
<dbReference type="UniPathway" id="UPA00189">
    <property type="reaction ID" value="UER00296"/>
</dbReference>
<dbReference type="GO" id="GO:0005829">
    <property type="term" value="C:cytosol"/>
    <property type="evidence" value="ECO:0007669"/>
    <property type="project" value="TreeGrafter"/>
</dbReference>
<dbReference type="GO" id="GO:0005524">
    <property type="term" value="F:ATP binding"/>
    <property type="evidence" value="ECO:0007669"/>
    <property type="project" value="UniProtKB-UniRule"/>
</dbReference>
<dbReference type="GO" id="GO:0003921">
    <property type="term" value="F:GMP synthase activity"/>
    <property type="evidence" value="ECO:0007669"/>
    <property type="project" value="InterPro"/>
</dbReference>
<dbReference type="CDD" id="cd01742">
    <property type="entry name" value="GATase1_GMP_Synthase"/>
    <property type="match status" value="1"/>
</dbReference>
<dbReference type="CDD" id="cd01997">
    <property type="entry name" value="GMP_synthase_C"/>
    <property type="match status" value="1"/>
</dbReference>
<dbReference type="FunFam" id="3.30.300.10:FF:000002">
    <property type="entry name" value="GMP synthase [glutamine-hydrolyzing]"/>
    <property type="match status" value="1"/>
</dbReference>
<dbReference type="FunFam" id="3.40.50.620:FF:000001">
    <property type="entry name" value="GMP synthase [glutamine-hydrolyzing]"/>
    <property type="match status" value="1"/>
</dbReference>
<dbReference type="FunFam" id="3.40.50.880:FF:000001">
    <property type="entry name" value="GMP synthase [glutamine-hydrolyzing]"/>
    <property type="match status" value="1"/>
</dbReference>
<dbReference type="Gene3D" id="3.30.300.10">
    <property type="match status" value="1"/>
</dbReference>
<dbReference type="Gene3D" id="3.40.50.880">
    <property type="match status" value="1"/>
</dbReference>
<dbReference type="Gene3D" id="3.40.50.620">
    <property type="entry name" value="HUPs"/>
    <property type="match status" value="1"/>
</dbReference>
<dbReference type="HAMAP" id="MF_00344">
    <property type="entry name" value="GMP_synthase"/>
    <property type="match status" value="1"/>
</dbReference>
<dbReference type="InterPro" id="IPR029062">
    <property type="entry name" value="Class_I_gatase-like"/>
</dbReference>
<dbReference type="InterPro" id="IPR017926">
    <property type="entry name" value="GATASE"/>
</dbReference>
<dbReference type="InterPro" id="IPR001674">
    <property type="entry name" value="GMP_synth_C"/>
</dbReference>
<dbReference type="InterPro" id="IPR004739">
    <property type="entry name" value="GMP_synth_GATase"/>
</dbReference>
<dbReference type="InterPro" id="IPR022955">
    <property type="entry name" value="GMP_synthase"/>
</dbReference>
<dbReference type="InterPro" id="IPR025777">
    <property type="entry name" value="GMPS_ATP_PPase_dom"/>
</dbReference>
<dbReference type="InterPro" id="IPR022310">
    <property type="entry name" value="NAD/GMP_synthase"/>
</dbReference>
<dbReference type="InterPro" id="IPR014729">
    <property type="entry name" value="Rossmann-like_a/b/a_fold"/>
</dbReference>
<dbReference type="NCBIfam" id="TIGR00884">
    <property type="entry name" value="guaA_Cterm"/>
    <property type="match status" value="1"/>
</dbReference>
<dbReference type="NCBIfam" id="TIGR00888">
    <property type="entry name" value="guaA_Nterm"/>
    <property type="match status" value="1"/>
</dbReference>
<dbReference type="NCBIfam" id="NF000848">
    <property type="entry name" value="PRK00074.1"/>
    <property type="match status" value="1"/>
</dbReference>
<dbReference type="PANTHER" id="PTHR11922:SF2">
    <property type="entry name" value="GMP SYNTHASE [GLUTAMINE-HYDROLYZING]"/>
    <property type="match status" value="1"/>
</dbReference>
<dbReference type="PANTHER" id="PTHR11922">
    <property type="entry name" value="GMP SYNTHASE-RELATED"/>
    <property type="match status" value="1"/>
</dbReference>
<dbReference type="Pfam" id="PF00117">
    <property type="entry name" value="GATase"/>
    <property type="match status" value="1"/>
</dbReference>
<dbReference type="Pfam" id="PF00958">
    <property type="entry name" value="GMP_synt_C"/>
    <property type="match status" value="1"/>
</dbReference>
<dbReference type="Pfam" id="PF02540">
    <property type="entry name" value="NAD_synthase"/>
    <property type="match status" value="1"/>
</dbReference>
<dbReference type="PRINTS" id="PR00097">
    <property type="entry name" value="ANTSNTHASEII"/>
</dbReference>
<dbReference type="PRINTS" id="PR00099">
    <property type="entry name" value="CPSGATASE"/>
</dbReference>
<dbReference type="PRINTS" id="PR00096">
    <property type="entry name" value="GATASE"/>
</dbReference>
<dbReference type="SUPFAM" id="SSF52402">
    <property type="entry name" value="Adenine nucleotide alpha hydrolases-like"/>
    <property type="match status" value="1"/>
</dbReference>
<dbReference type="SUPFAM" id="SSF52317">
    <property type="entry name" value="Class I glutamine amidotransferase-like"/>
    <property type="match status" value="1"/>
</dbReference>
<dbReference type="SUPFAM" id="SSF54810">
    <property type="entry name" value="GMP synthetase C-terminal dimerisation domain"/>
    <property type="match status" value="1"/>
</dbReference>
<dbReference type="PROSITE" id="PS51273">
    <property type="entry name" value="GATASE_TYPE_1"/>
    <property type="match status" value="1"/>
</dbReference>
<dbReference type="PROSITE" id="PS51553">
    <property type="entry name" value="GMPS_ATP_PPASE"/>
    <property type="match status" value="1"/>
</dbReference>
<name>GUAA_STRT1</name>
<feature type="chain" id="PRO_0000229477" description="GMP synthase [glutamine-hydrolyzing]">
    <location>
        <begin position="1"/>
        <end position="527"/>
    </location>
</feature>
<feature type="domain" description="Glutamine amidotransferase type-1" evidence="1">
    <location>
        <begin position="19"/>
        <end position="212"/>
    </location>
</feature>
<feature type="domain" description="GMPS ATP-PPase" evidence="1">
    <location>
        <begin position="213"/>
        <end position="402"/>
    </location>
</feature>
<feature type="active site" description="Nucleophile" evidence="1">
    <location>
        <position position="96"/>
    </location>
</feature>
<feature type="active site" evidence="1">
    <location>
        <position position="186"/>
    </location>
</feature>
<feature type="active site" evidence="1">
    <location>
        <position position="188"/>
    </location>
</feature>
<feature type="binding site" evidence="1">
    <location>
        <begin position="240"/>
        <end position="246"/>
    </location>
    <ligand>
        <name>ATP</name>
        <dbReference type="ChEBI" id="CHEBI:30616"/>
    </ligand>
</feature>
<sequence>MQKERVIMTNISTLNDVQKIIVLDYGSQYNQLIARRIREFGVFSELKSHKITADEVRAINPIGIILSGGPNSVYAEDAFGIDEEIFELGIPILGICYGMQLLTHKLGGKVVPAGEAGNREYGQSTLRLRAQSELFAGTPEEQVVLMSHGDAVTEIPEGFHLVADSVDCPFAAMEDTKKNFYGIQFHPEVRHTVYGNDILKNFAFSICGAKGDWSMANFVDMQIAQIRETVGDRKVLLGLSGGVDSSVVGVLLQKAIGDQLTCIFVDHGLLRKGEGDQVMEMLGGKFGLNIIRVDASKRFLDLLAGVDDPDKKRKIIGNEFVHVFDDEASKLKGVDFLAQGTLYTDIIESGTETAQTIKSHHNVGGLPEDMQFELIEPLNTLFKDEVRALGTELGMPDEVVWRQPFPGPGLAIRIMGEITEEKLETVRESDAILREEIAKAGLDRDVWQYFTVNTGVRSVGVMGDGRTYDYTIAIRAITSIDGMTADFAKLPWEVLQKISVRIVNEVDHVNRIVYDITSKPPATVEWE</sequence>
<evidence type="ECO:0000255" key="1">
    <source>
        <dbReference type="HAMAP-Rule" id="MF_00344"/>
    </source>
</evidence>
<organism>
    <name type="scientific">Streptococcus thermophilus (strain CNRZ 1066)</name>
    <dbReference type="NCBI Taxonomy" id="299768"/>
    <lineage>
        <taxon>Bacteria</taxon>
        <taxon>Bacillati</taxon>
        <taxon>Bacillota</taxon>
        <taxon>Bacilli</taxon>
        <taxon>Lactobacillales</taxon>
        <taxon>Streptococcaceae</taxon>
        <taxon>Streptococcus</taxon>
    </lineage>
</organism>
<proteinExistence type="inferred from homology"/>
<reference key="1">
    <citation type="journal article" date="2004" name="Nat. Biotechnol.">
        <title>Complete sequence and comparative genome analysis of the dairy bacterium Streptococcus thermophilus.</title>
        <authorList>
            <person name="Bolotin A."/>
            <person name="Quinquis B."/>
            <person name="Renault P."/>
            <person name="Sorokin A."/>
            <person name="Ehrlich S.D."/>
            <person name="Kulakauskas S."/>
            <person name="Lapidus A."/>
            <person name="Goltsman E."/>
            <person name="Mazur M."/>
            <person name="Pusch G.D."/>
            <person name="Fonstein M."/>
            <person name="Overbeek R."/>
            <person name="Kyprides N."/>
            <person name="Purnelle B."/>
            <person name="Prozzi D."/>
            <person name="Ngui K."/>
            <person name="Masuy D."/>
            <person name="Hancy F."/>
            <person name="Burteau S."/>
            <person name="Boutry M."/>
            <person name="Delcour J."/>
            <person name="Goffeau A."/>
            <person name="Hols P."/>
        </authorList>
    </citation>
    <scope>NUCLEOTIDE SEQUENCE [LARGE SCALE GENOMIC DNA]</scope>
    <source>
        <strain>CNRZ 1066</strain>
    </source>
</reference>
<gene>
    <name evidence="1" type="primary">guaA</name>
    <name type="ordered locus">str0886</name>
</gene>
<keyword id="KW-0067">ATP-binding</keyword>
<keyword id="KW-0315">Glutamine amidotransferase</keyword>
<keyword id="KW-0332">GMP biosynthesis</keyword>
<keyword id="KW-0436">Ligase</keyword>
<keyword id="KW-0547">Nucleotide-binding</keyword>
<keyword id="KW-0658">Purine biosynthesis</keyword>
<protein>
    <recommendedName>
        <fullName evidence="1">GMP synthase [glutamine-hydrolyzing]</fullName>
        <ecNumber evidence="1">6.3.5.2</ecNumber>
    </recommendedName>
    <alternativeName>
        <fullName evidence="1">GMP synthetase</fullName>
    </alternativeName>
    <alternativeName>
        <fullName evidence="1">Glutamine amidotransferase</fullName>
    </alternativeName>
</protein>
<accession>Q5M029</accession>
<comment type="function">
    <text evidence="1">Catalyzes the synthesis of GMP from XMP.</text>
</comment>
<comment type="catalytic activity">
    <reaction evidence="1">
        <text>XMP + L-glutamine + ATP + H2O = GMP + L-glutamate + AMP + diphosphate + 2 H(+)</text>
        <dbReference type="Rhea" id="RHEA:11680"/>
        <dbReference type="ChEBI" id="CHEBI:15377"/>
        <dbReference type="ChEBI" id="CHEBI:15378"/>
        <dbReference type="ChEBI" id="CHEBI:29985"/>
        <dbReference type="ChEBI" id="CHEBI:30616"/>
        <dbReference type="ChEBI" id="CHEBI:33019"/>
        <dbReference type="ChEBI" id="CHEBI:57464"/>
        <dbReference type="ChEBI" id="CHEBI:58115"/>
        <dbReference type="ChEBI" id="CHEBI:58359"/>
        <dbReference type="ChEBI" id="CHEBI:456215"/>
        <dbReference type="EC" id="6.3.5.2"/>
    </reaction>
</comment>
<comment type="pathway">
    <text evidence="1">Purine metabolism; GMP biosynthesis; GMP from XMP (L-Gln route): step 1/1.</text>
</comment>
<comment type="subunit">
    <text evidence="1">Homodimer.</text>
</comment>